<gene>
    <name evidence="1" type="primary">rplP</name>
    <name type="ordered locus">FTH_0238</name>
</gene>
<organism>
    <name type="scientific">Francisella tularensis subsp. holarctica (strain OSU18)</name>
    <dbReference type="NCBI Taxonomy" id="393011"/>
    <lineage>
        <taxon>Bacteria</taxon>
        <taxon>Pseudomonadati</taxon>
        <taxon>Pseudomonadota</taxon>
        <taxon>Gammaproteobacteria</taxon>
        <taxon>Thiotrichales</taxon>
        <taxon>Francisellaceae</taxon>
        <taxon>Francisella</taxon>
    </lineage>
</organism>
<evidence type="ECO:0000255" key="1">
    <source>
        <dbReference type="HAMAP-Rule" id="MF_01342"/>
    </source>
</evidence>
<evidence type="ECO:0000305" key="2"/>
<reference key="1">
    <citation type="journal article" date="2006" name="J. Bacteriol.">
        <title>Chromosome rearrangement and diversification of Francisella tularensis revealed by the type B (OSU18) genome sequence.</title>
        <authorList>
            <person name="Petrosino J.F."/>
            <person name="Xiang Q."/>
            <person name="Karpathy S.E."/>
            <person name="Jiang H."/>
            <person name="Yerrapragada S."/>
            <person name="Liu Y."/>
            <person name="Gioia J."/>
            <person name="Hemphill L."/>
            <person name="Gonzalez A."/>
            <person name="Raghavan T.M."/>
            <person name="Uzman A."/>
            <person name="Fox G.E."/>
            <person name="Highlander S."/>
            <person name="Reichard M."/>
            <person name="Morton R.J."/>
            <person name="Clinkenbeard K.D."/>
            <person name="Weinstock G.M."/>
        </authorList>
    </citation>
    <scope>NUCLEOTIDE SEQUENCE [LARGE SCALE GENOMIC DNA]</scope>
    <source>
        <strain>OSU18</strain>
    </source>
</reference>
<comment type="function">
    <text evidence="1">Binds 23S rRNA and is also seen to make contacts with the A and possibly P site tRNAs.</text>
</comment>
<comment type="subunit">
    <text evidence="1">Part of the 50S ribosomal subunit.</text>
</comment>
<comment type="similarity">
    <text evidence="1">Belongs to the universal ribosomal protein uL16 family.</text>
</comment>
<dbReference type="EMBL" id="CP000437">
    <property type="protein sequence ID" value="ABI82264.1"/>
    <property type="molecule type" value="Genomic_DNA"/>
</dbReference>
<dbReference type="RefSeq" id="WP_010030778.1">
    <property type="nucleotide sequence ID" value="NC_017463.1"/>
</dbReference>
<dbReference type="SMR" id="Q0BNS0"/>
<dbReference type="KEGG" id="fth:FTH_0238"/>
<dbReference type="GO" id="GO:0022625">
    <property type="term" value="C:cytosolic large ribosomal subunit"/>
    <property type="evidence" value="ECO:0007669"/>
    <property type="project" value="TreeGrafter"/>
</dbReference>
<dbReference type="GO" id="GO:0019843">
    <property type="term" value="F:rRNA binding"/>
    <property type="evidence" value="ECO:0007669"/>
    <property type="project" value="UniProtKB-UniRule"/>
</dbReference>
<dbReference type="GO" id="GO:0003735">
    <property type="term" value="F:structural constituent of ribosome"/>
    <property type="evidence" value="ECO:0007669"/>
    <property type="project" value="InterPro"/>
</dbReference>
<dbReference type="GO" id="GO:0000049">
    <property type="term" value="F:tRNA binding"/>
    <property type="evidence" value="ECO:0007669"/>
    <property type="project" value="UniProtKB-KW"/>
</dbReference>
<dbReference type="GO" id="GO:0006412">
    <property type="term" value="P:translation"/>
    <property type="evidence" value="ECO:0007669"/>
    <property type="project" value="UniProtKB-UniRule"/>
</dbReference>
<dbReference type="CDD" id="cd01433">
    <property type="entry name" value="Ribosomal_L16_L10e"/>
    <property type="match status" value="1"/>
</dbReference>
<dbReference type="FunFam" id="3.90.1170.10:FF:000001">
    <property type="entry name" value="50S ribosomal protein L16"/>
    <property type="match status" value="1"/>
</dbReference>
<dbReference type="Gene3D" id="3.90.1170.10">
    <property type="entry name" value="Ribosomal protein L10e/L16"/>
    <property type="match status" value="1"/>
</dbReference>
<dbReference type="HAMAP" id="MF_01342">
    <property type="entry name" value="Ribosomal_uL16"/>
    <property type="match status" value="1"/>
</dbReference>
<dbReference type="InterPro" id="IPR047873">
    <property type="entry name" value="Ribosomal_uL16"/>
</dbReference>
<dbReference type="InterPro" id="IPR000114">
    <property type="entry name" value="Ribosomal_uL16_bact-type"/>
</dbReference>
<dbReference type="InterPro" id="IPR020798">
    <property type="entry name" value="Ribosomal_uL16_CS"/>
</dbReference>
<dbReference type="InterPro" id="IPR016180">
    <property type="entry name" value="Ribosomal_uL16_dom"/>
</dbReference>
<dbReference type="InterPro" id="IPR036920">
    <property type="entry name" value="Ribosomal_uL16_sf"/>
</dbReference>
<dbReference type="NCBIfam" id="TIGR01164">
    <property type="entry name" value="rplP_bact"/>
    <property type="match status" value="1"/>
</dbReference>
<dbReference type="PANTHER" id="PTHR12220">
    <property type="entry name" value="50S/60S RIBOSOMAL PROTEIN L16"/>
    <property type="match status" value="1"/>
</dbReference>
<dbReference type="PANTHER" id="PTHR12220:SF13">
    <property type="entry name" value="LARGE RIBOSOMAL SUBUNIT PROTEIN UL16M"/>
    <property type="match status" value="1"/>
</dbReference>
<dbReference type="Pfam" id="PF00252">
    <property type="entry name" value="Ribosomal_L16"/>
    <property type="match status" value="1"/>
</dbReference>
<dbReference type="PRINTS" id="PR00060">
    <property type="entry name" value="RIBOSOMALL16"/>
</dbReference>
<dbReference type="SUPFAM" id="SSF54686">
    <property type="entry name" value="Ribosomal protein L16p/L10e"/>
    <property type="match status" value="1"/>
</dbReference>
<dbReference type="PROSITE" id="PS00586">
    <property type="entry name" value="RIBOSOMAL_L16_1"/>
    <property type="match status" value="1"/>
</dbReference>
<dbReference type="PROSITE" id="PS00701">
    <property type="entry name" value="RIBOSOMAL_L16_2"/>
    <property type="match status" value="1"/>
</dbReference>
<name>RL16_FRATO</name>
<sequence>MLQPKRTKFRKQQKLRNRGLAYRGNKVSFGEFGLQATSRGRITARQIEAGRRAISRHIKRGGKIWIRIFPDKPITQKPLEVRMGKGKGSVEYWVAQIQPGRVLYEITGVKEELAREAFARAAAKMPVQTTFVEKQVM</sequence>
<accession>Q0BNS0</accession>
<feature type="chain" id="PRO_1000054624" description="Large ribosomal subunit protein uL16">
    <location>
        <begin position="1"/>
        <end position="137"/>
    </location>
</feature>
<proteinExistence type="inferred from homology"/>
<protein>
    <recommendedName>
        <fullName evidence="1">Large ribosomal subunit protein uL16</fullName>
    </recommendedName>
    <alternativeName>
        <fullName evidence="2">50S ribosomal protein L16</fullName>
    </alternativeName>
</protein>
<keyword id="KW-0687">Ribonucleoprotein</keyword>
<keyword id="KW-0689">Ribosomal protein</keyword>
<keyword id="KW-0694">RNA-binding</keyword>
<keyword id="KW-0699">rRNA-binding</keyword>
<keyword id="KW-0820">tRNA-binding</keyword>